<gene>
    <name type="primary">cdtA</name>
    <name type="ordered locus">Cj0079c</name>
</gene>
<reference key="1">
    <citation type="submission" date="1997-12" db="EMBL/GenBank/DDBJ databases">
        <title>Coordinate regulation of virulence factors of Campylobacter spp. by bile salts.</title>
        <authorList>
            <person name="Scott D.A."/>
            <person name="McVeigh A.L."/>
            <person name="Pratt C."/>
            <person name="Lee L."/>
            <person name="Michielutti R.E."/>
            <person name="Kinsella N."/>
            <person name="Trust T.J."/>
            <person name="Guerry P."/>
        </authorList>
    </citation>
    <scope>NUCLEOTIDE SEQUENCE [GENOMIC DNA]</scope>
    <source>
        <strain>CH5</strain>
    </source>
</reference>
<reference key="2">
    <citation type="journal article" date="2000" name="Nature">
        <title>The genome sequence of the food-borne pathogen Campylobacter jejuni reveals hypervariable sequences.</title>
        <authorList>
            <person name="Parkhill J."/>
            <person name="Wren B.W."/>
            <person name="Mungall K.L."/>
            <person name="Ketley J.M."/>
            <person name="Churcher C.M."/>
            <person name="Basham D."/>
            <person name="Chillingworth T."/>
            <person name="Davies R.M."/>
            <person name="Feltwell T."/>
            <person name="Holroyd S."/>
            <person name="Jagels K."/>
            <person name="Karlyshev A.V."/>
            <person name="Moule S."/>
            <person name="Pallen M.J."/>
            <person name="Penn C.W."/>
            <person name="Quail M.A."/>
            <person name="Rajandream M.A."/>
            <person name="Rutherford K.M."/>
            <person name="van Vliet A.H.M."/>
            <person name="Whitehead S."/>
            <person name="Barrell B.G."/>
        </authorList>
    </citation>
    <scope>NUCLEOTIDE SEQUENCE [LARGE SCALE GENOMIC DNA]</scope>
    <source>
        <strain>ATCC 700819 / NCTC 11168</strain>
    </source>
</reference>
<dbReference type="EMBL" id="AF038283">
    <property type="protein sequence ID" value="AAF16678.1"/>
    <property type="molecule type" value="Genomic_DNA"/>
</dbReference>
<dbReference type="EMBL" id="AL111168">
    <property type="protein sequence ID" value="CAL34252.1"/>
    <property type="molecule type" value="Genomic_DNA"/>
</dbReference>
<dbReference type="PIR" id="A81424">
    <property type="entry name" value="A81424"/>
</dbReference>
<dbReference type="RefSeq" id="WP_002852021.1">
    <property type="nucleotide sequence ID" value="NZ_SZUC01000005.1"/>
</dbReference>
<dbReference type="RefSeq" id="YP_002343541.1">
    <property type="nucleotide sequence ID" value="NC_002163.1"/>
</dbReference>
<dbReference type="SMR" id="Q0PC56"/>
<dbReference type="STRING" id="192222.Cj0079c"/>
<dbReference type="PaxDb" id="192222-Cj0079c"/>
<dbReference type="EnsemblBacteria" id="CAL34252">
    <property type="protein sequence ID" value="CAL34252"/>
    <property type="gene ID" value="Cj0079c"/>
</dbReference>
<dbReference type="GeneID" id="904406"/>
<dbReference type="KEGG" id="cje:Cj0079c"/>
<dbReference type="PATRIC" id="fig|192222.6.peg.78"/>
<dbReference type="eggNOG" id="ENOG50347HZ">
    <property type="taxonomic scope" value="Bacteria"/>
</dbReference>
<dbReference type="HOGENOM" id="CLU_090932_0_0_7"/>
<dbReference type="OrthoDB" id="5353389at2"/>
<dbReference type="PHI-base" id="PHI:7848"/>
<dbReference type="Proteomes" id="UP000000799">
    <property type="component" value="Chromosome"/>
</dbReference>
<dbReference type="GO" id="GO:0009279">
    <property type="term" value="C:cell outer membrane"/>
    <property type="evidence" value="ECO:0007669"/>
    <property type="project" value="UniProtKB-SubCell"/>
</dbReference>
<dbReference type="GO" id="GO:0030246">
    <property type="term" value="F:carbohydrate binding"/>
    <property type="evidence" value="ECO:0007669"/>
    <property type="project" value="UniProtKB-KW"/>
</dbReference>
<dbReference type="GO" id="GO:0090729">
    <property type="term" value="F:toxin activity"/>
    <property type="evidence" value="ECO:0007669"/>
    <property type="project" value="UniProtKB-KW"/>
</dbReference>
<dbReference type="CDD" id="cd23414">
    <property type="entry name" value="beta-trefoil_Ricin_CdtA"/>
    <property type="match status" value="1"/>
</dbReference>
<dbReference type="Gene3D" id="2.80.10.50">
    <property type="match status" value="1"/>
</dbReference>
<dbReference type="InterPro" id="IPR015957">
    <property type="entry name" value="CDtoxinA"/>
</dbReference>
<dbReference type="InterPro" id="IPR003558">
    <property type="entry name" value="CDtoxinA/C"/>
</dbReference>
<dbReference type="InterPro" id="IPR035992">
    <property type="entry name" value="Ricin_B-like_lectins"/>
</dbReference>
<dbReference type="Pfam" id="PF03498">
    <property type="entry name" value="CDtoxinA"/>
    <property type="match status" value="1"/>
</dbReference>
<dbReference type="PIRSF" id="PIRSF036516">
    <property type="entry name" value="CDT_A"/>
    <property type="match status" value="1"/>
</dbReference>
<dbReference type="SUPFAM" id="SSF50370">
    <property type="entry name" value="Ricin B-like lectins"/>
    <property type="match status" value="1"/>
</dbReference>
<dbReference type="PROSITE" id="PS51257">
    <property type="entry name" value="PROKAR_LIPOPROTEIN"/>
    <property type="match status" value="1"/>
</dbReference>
<dbReference type="PROSITE" id="PS50231">
    <property type="entry name" value="RICIN_B_LECTIN"/>
    <property type="match status" value="1"/>
</dbReference>
<proteinExistence type="inferred from homology"/>
<evidence type="ECO:0000250" key="1"/>
<evidence type="ECO:0000255" key="2">
    <source>
        <dbReference type="PROSITE-ProRule" id="PRU00174"/>
    </source>
</evidence>
<evidence type="ECO:0000255" key="3">
    <source>
        <dbReference type="PROSITE-ProRule" id="PRU00303"/>
    </source>
</evidence>
<evidence type="ECO:0000305" key="4"/>
<name>CDTA_CAMJE</name>
<organism>
    <name type="scientific">Campylobacter jejuni subsp. jejuni serotype O:2 (strain ATCC 700819 / NCTC 11168)</name>
    <dbReference type="NCBI Taxonomy" id="192222"/>
    <lineage>
        <taxon>Bacteria</taxon>
        <taxon>Pseudomonadati</taxon>
        <taxon>Campylobacterota</taxon>
        <taxon>Epsilonproteobacteria</taxon>
        <taxon>Campylobacterales</taxon>
        <taxon>Campylobacteraceae</taxon>
        <taxon>Campylobacter</taxon>
    </lineage>
</organism>
<protein>
    <recommendedName>
        <fullName>Cytolethal distending toxin subunit A</fullName>
        <shortName>CDT A</shortName>
    </recommendedName>
</protein>
<keyword id="KW-0998">Cell outer membrane</keyword>
<keyword id="KW-0430">Lectin</keyword>
<keyword id="KW-0449">Lipoprotein</keyword>
<keyword id="KW-0472">Membrane</keyword>
<keyword id="KW-0564">Palmitate</keyword>
<keyword id="KW-1185">Reference proteome</keyword>
<keyword id="KW-0732">Signal</keyword>
<keyword id="KW-0800">Toxin</keyword>
<keyword id="KW-0843">Virulence</keyword>
<accession>Q0PC56</accession>
<accession>Q46100</accession>
<sequence length="268" mass="29919">MQKIIVFILCCFMTFFLYACSSKFENVNPLGRSFGEFEDTDPLKLGLEPTFPTNQEIPSLISGADLVPITPITPPLTRTSNSANNNAANGINPRFKDEAFNDVLIFENRPAVSDFLTILGPSGAALTVWALAQGNWIWGYTLIDSKGFGDARVWQLLLYPNDFAMIKNAKTNTCLNAYGNGIVHYPCDASNHAQMWKLIPMSNTAVQIKNLGNGKCIQAPITNLYGDFHKVFKIFTVECAKKDNFDQQWFLTTPPFTAKPLYRQGEVR</sequence>
<comment type="function">
    <text evidence="1">CDTs are cytotoxins which induce cell distension, growth arrest in G2/M phase, nucleus swelling, and chromatin fragmentation in HeLa cells.</text>
</comment>
<comment type="subunit">
    <text evidence="1">Heterotrimer of 3 subunits, CdtA, CdtB and CdtC.</text>
</comment>
<comment type="subcellular location">
    <subcellularLocation>
        <location evidence="4">Cell outer membrane</location>
        <topology evidence="4">Lipid-anchor</topology>
    </subcellularLocation>
</comment>
<feature type="signal peptide" evidence="3">
    <location>
        <begin position="1"/>
        <end position="19"/>
    </location>
</feature>
<feature type="chain" id="PRO_0000013369" description="Cytolethal distending toxin subunit A">
    <location>
        <begin position="20"/>
        <end position="268"/>
    </location>
</feature>
<feature type="domain" description="Ricin B-type lectin" evidence="2">
    <location>
        <begin position="112"/>
        <end position="252"/>
    </location>
</feature>
<feature type="region of interest" description="Mediates binding to target cells" evidence="1">
    <location>
        <begin position="129"/>
        <end position="140"/>
    </location>
</feature>
<feature type="lipid moiety-binding region" description="N-palmitoyl cysteine" evidence="4">
    <location>
        <position position="20"/>
    </location>
</feature>
<feature type="lipid moiety-binding region" description="S-diacylglycerol cysteine" evidence="4">
    <location>
        <position position="20"/>
    </location>
</feature>